<reference key="1">
    <citation type="journal article" date="2009" name="PLoS Genet.">
        <title>Organised genome dynamics in the Escherichia coli species results in highly diverse adaptive paths.</title>
        <authorList>
            <person name="Touchon M."/>
            <person name="Hoede C."/>
            <person name="Tenaillon O."/>
            <person name="Barbe V."/>
            <person name="Baeriswyl S."/>
            <person name="Bidet P."/>
            <person name="Bingen E."/>
            <person name="Bonacorsi S."/>
            <person name="Bouchier C."/>
            <person name="Bouvet O."/>
            <person name="Calteau A."/>
            <person name="Chiapello H."/>
            <person name="Clermont O."/>
            <person name="Cruveiller S."/>
            <person name="Danchin A."/>
            <person name="Diard M."/>
            <person name="Dossat C."/>
            <person name="Karoui M.E."/>
            <person name="Frapy E."/>
            <person name="Garry L."/>
            <person name="Ghigo J.M."/>
            <person name="Gilles A.M."/>
            <person name="Johnson J."/>
            <person name="Le Bouguenec C."/>
            <person name="Lescat M."/>
            <person name="Mangenot S."/>
            <person name="Martinez-Jehanne V."/>
            <person name="Matic I."/>
            <person name="Nassif X."/>
            <person name="Oztas S."/>
            <person name="Petit M.A."/>
            <person name="Pichon C."/>
            <person name="Rouy Z."/>
            <person name="Ruf C.S."/>
            <person name="Schneider D."/>
            <person name="Tourret J."/>
            <person name="Vacherie B."/>
            <person name="Vallenet D."/>
            <person name="Medigue C."/>
            <person name="Rocha E.P.C."/>
            <person name="Denamur E."/>
        </authorList>
    </citation>
    <scope>NUCLEOTIDE SEQUENCE [LARGE SCALE GENOMIC DNA]</scope>
    <source>
        <strain>UMN026 / ExPEC</strain>
    </source>
</reference>
<comment type="function">
    <text evidence="1">Transfers the 4'-phosphopantetheine moiety from coenzyme A to a Ser of acyl-carrier-protein.</text>
</comment>
<comment type="catalytic activity">
    <reaction evidence="1">
        <text>apo-[ACP] + CoA = holo-[ACP] + adenosine 3',5'-bisphosphate + H(+)</text>
        <dbReference type="Rhea" id="RHEA:12068"/>
        <dbReference type="Rhea" id="RHEA-COMP:9685"/>
        <dbReference type="Rhea" id="RHEA-COMP:9690"/>
        <dbReference type="ChEBI" id="CHEBI:15378"/>
        <dbReference type="ChEBI" id="CHEBI:29999"/>
        <dbReference type="ChEBI" id="CHEBI:57287"/>
        <dbReference type="ChEBI" id="CHEBI:58343"/>
        <dbReference type="ChEBI" id="CHEBI:64479"/>
        <dbReference type="EC" id="2.7.8.7"/>
    </reaction>
</comment>
<comment type="cofactor">
    <cofactor evidence="1">
        <name>Mg(2+)</name>
        <dbReference type="ChEBI" id="CHEBI:18420"/>
    </cofactor>
</comment>
<comment type="subcellular location">
    <subcellularLocation>
        <location evidence="1">Cytoplasm</location>
    </subcellularLocation>
</comment>
<comment type="similarity">
    <text evidence="1">Belongs to the P-Pant transferase superfamily. AcpS family.</text>
</comment>
<dbReference type="EC" id="2.7.8.7" evidence="1"/>
<dbReference type="EMBL" id="CU928163">
    <property type="protein sequence ID" value="CAR14060.1"/>
    <property type="molecule type" value="Genomic_DNA"/>
</dbReference>
<dbReference type="RefSeq" id="WP_000986047.1">
    <property type="nucleotide sequence ID" value="NC_011751.1"/>
</dbReference>
<dbReference type="RefSeq" id="YP_002413586.1">
    <property type="nucleotide sequence ID" value="NC_011751.1"/>
</dbReference>
<dbReference type="SMR" id="B7N6F1"/>
<dbReference type="STRING" id="585056.ECUMN_2884"/>
<dbReference type="KEGG" id="eum:ECUMN_2884"/>
<dbReference type="PATRIC" id="fig|585056.7.peg.3070"/>
<dbReference type="HOGENOM" id="CLU_089696_3_1_6"/>
<dbReference type="Proteomes" id="UP000007097">
    <property type="component" value="Chromosome"/>
</dbReference>
<dbReference type="GO" id="GO:0005737">
    <property type="term" value="C:cytoplasm"/>
    <property type="evidence" value="ECO:0007669"/>
    <property type="project" value="UniProtKB-SubCell"/>
</dbReference>
<dbReference type="GO" id="GO:0008897">
    <property type="term" value="F:holo-[acyl-carrier-protein] synthase activity"/>
    <property type="evidence" value="ECO:0007669"/>
    <property type="project" value="UniProtKB-UniRule"/>
</dbReference>
<dbReference type="GO" id="GO:0000287">
    <property type="term" value="F:magnesium ion binding"/>
    <property type="evidence" value="ECO:0007669"/>
    <property type="project" value="UniProtKB-UniRule"/>
</dbReference>
<dbReference type="GO" id="GO:0006633">
    <property type="term" value="P:fatty acid biosynthetic process"/>
    <property type="evidence" value="ECO:0007669"/>
    <property type="project" value="UniProtKB-UniRule"/>
</dbReference>
<dbReference type="FunFam" id="3.90.470.20:FF:000001">
    <property type="entry name" value="Holo-[acyl-carrier-protein] synthase"/>
    <property type="match status" value="1"/>
</dbReference>
<dbReference type="Gene3D" id="3.90.470.20">
    <property type="entry name" value="4'-phosphopantetheinyl transferase domain"/>
    <property type="match status" value="1"/>
</dbReference>
<dbReference type="HAMAP" id="MF_00101">
    <property type="entry name" value="AcpS"/>
    <property type="match status" value="1"/>
</dbReference>
<dbReference type="InterPro" id="IPR008278">
    <property type="entry name" value="4-PPantetheinyl_Trfase_dom"/>
</dbReference>
<dbReference type="InterPro" id="IPR037143">
    <property type="entry name" value="4-PPantetheinyl_Trfase_dom_sf"/>
</dbReference>
<dbReference type="InterPro" id="IPR002582">
    <property type="entry name" value="ACPS"/>
</dbReference>
<dbReference type="InterPro" id="IPR004568">
    <property type="entry name" value="Ppantetheine-prot_Trfase_dom"/>
</dbReference>
<dbReference type="NCBIfam" id="TIGR00516">
    <property type="entry name" value="acpS"/>
    <property type="match status" value="1"/>
</dbReference>
<dbReference type="NCBIfam" id="TIGR00556">
    <property type="entry name" value="pantethn_trn"/>
    <property type="match status" value="1"/>
</dbReference>
<dbReference type="Pfam" id="PF01648">
    <property type="entry name" value="ACPS"/>
    <property type="match status" value="1"/>
</dbReference>
<dbReference type="SUPFAM" id="SSF56214">
    <property type="entry name" value="4'-phosphopantetheinyl transferase"/>
    <property type="match status" value="1"/>
</dbReference>
<gene>
    <name evidence="1" type="primary">acpS</name>
    <name type="ordered locus">ECUMN_2884</name>
</gene>
<accession>B7N6F1</accession>
<protein>
    <recommendedName>
        <fullName evidence="1">Holo-[acyl-carrier-protein] synthase</fullName>
        <shortName evidence="1">Holo-ACP synthase</shortName>
        <ecNumber evidence="1">2.7.8.7</ecNumber>
    </recommendedName>
    <alternativeName>
        <fullName evidence="1">4'-phosphopantetheinyl transferase AcpS</fullName>
    </alternativeName>
</protein>
<name>ACPS_ECOLU</name>
<feature type="chain" id="PRO_1000117351" description="Holo-[acyl-carrier-protein] synthase">
    <location>
        <begin position="1"/>
        <end position="126"/>
    </location>
</feature>
<feature type="binding site" evidence="1">
    <location>
        <position position="9"/>
    </location>
    <ligand>
        <name>Mg(2+)</name>
        <dbReference type="ChEBI" id="CHEBI:18420"/>
    </ligand>
</feature>
<feature type="binding site" evidence="1">
    <location>
        <position position="58"/>
    </location>
    <ligand>
        <name>Mg(2+)</name>
        <dbReference type="ChEBI" id="CHEBI:18420"/>
    </ligand>
</feature>
<evidence type="ECO:0000255" key="1">
    <source>
        <dbReference type="HAMAP-Rule" id="MF_00101"/>
    </source>
</evidence>
<organism>
    <name type="scientific">Escherichia coli O17:K52:H18 (strain UMN026 / ExPEC)</name>
    <dbReference type="NCBI Taxonomy" id="585056"/>
    <lineage>
        <taxon>Bacteria</taxon>
        <taxon>Pseudomonadati</taxon>
        <taxon>Pseudomonadota</taxon>
        <taxon>Gammaproteobacteria</taxon>
        <taxon>Enterobacterales</taxon>
        <taxon>Enterobacteriaceae</taxon>
        <taxon>Escherichia</taxon>
    </lineage>
</organism>
<proteinExistence type="inferred from homology"/>
<keyword id="KW-0963">Cytoplasm</keyword>
<keyword id="KW-0275">Fatty acid biosynthesis</keyword>
<keyword id="KW-0276">Fatty acid metabolism</keyword>
<keyword id="KW-0444">Lipid biosynthesis</keyword>
<keyword id="KW-0443">Lipid metabolism</keyword>
<keyword id="KW-0460">Magnesium</keyword>
<keyword id="KW-0479">Metal-binding</keyword>
<keyword id="KW-0808">Transferase</keyword>
<sequence>MAILGLGTDIVEIARIESVIARSGERLARRVLSDNEWAIWKTHHQPVRFLAKRFAVKEAAAKAFGTGIRNGLAFNQFEVFNDELGKPRLRLWGEALKLAEKLGVVNMHVTLADERHYACATVIIES</sequence>